<reference key="1">
    <citation type="journal article" date="2008" name="Environ. Microbiol.">
        <title>The genome of Erwinia tasmaniensis strain Et1/99, a non-pathogenic bacterium in the genus Erwinia.</title>
        <authorList>
            <person name="Kube M."/>
            <person name="Migdoll A.M."/>
            <person name="Mueller I."/>
            <person name="Kuhl H."/>
            <person name="Beck A."/>
            <person name="Reinhardt R."/>
            <person name="Geider K."/>
        </authorList>
    </citation>
    <scope>NUCLEOTIDE SEQUENCE [LARGE SCALE GENOMIC DNA]</scope>
    <source>
        <strain>DSM 17950 / CFBP 7177 / CIP 109463 / NCPPB 4357 / Et1/99</strain>
    </source>
</reference>
<comment type="function">
    <text evidence="1">Binds to the 23S rRNA.</text>
</comment>
<comment type="subunit">
    <text evidence="1">Part of the 50S ribosomal subunit.</text>
</comment>
<comment type="similarity">
    <text evidence="1">Belongs to the universal ribosomal protein uL15 family.</text>
</comment>
<protein>
    <recommendedName>
        <fullName evidence="1">Large ribosomal subunit protein uL15</fullName>
    </recommendedName>
    <alternativeName>
        <fullName evidence="3">50S ribosomal protein L15</fullName>
    </alternativeName>
</protein>
<accession>B2VK77</accession>
<name>RL15_ERWT9</name>
<sequence length="144" mass="15051">MRLNTLSPADGSKHAPKRLGRGIGSGLGKTGGRGHKGQNSRSGGGVRRGFEGGQMPLYRRLPKFGFTSRKAMVTAEVRLSDLAKVEGGIVDLNTLKAANIIGIQMEFAKVILSGEVSAPVTIRGLRVTKGARAAIEAAGGKIEE</sequence>
<keyword id="KW-1185">Reference proteome</keyword>
<keyword id="KW-0687">Ribonucleoprotein</keyword>
<keyword id="KW-0689">Ribosomal protein</keyword>
<keyword id="KW-0694">RNA-binding</keyword>
<keyword id="KW-0699">rRNA-binding</keyword>
<proteinExistence type="inferred from homology"/>
<evidence type="ECO:0000255" key="1">
    <source>
        <dbReference type="HAMAP-Rule" id="MF_01341"/>
    </source>
</evidence>
<evidence type="ECO:0000256" key="2">
    <source>
        <dbReference type="SAM" id="MobiDB-lite"/>
    </source>
</evidence>
<evidence type="ECO:0000305" key="3"/>
<organism>
    <name type="scientific">Erwinia tasmaniensis (strain DSM 17950 / CFBP 7177 / CIP 109463 / NCPPB 4357 / Et1/99)</name>
    <dbReference type="NCBI Taxonomy" id="465817"/>
    <lineage>
        <taxon>Bacteria</taxon>
        <taxon>Pseudomonadati</taxon>
        <taxon>Pseudomonadota</taxon>
        <taxon>Gammaproteobacteria</taxon>
        <taxon>Enterobacterales</taxon>
        <taxon>Erwiniaceae</taxon>
        <taxon>Erwinia</taxon>
    </lineage>
</organism>
<feature type="chain" id="PRO_1000142818" description="Large ribosomal subunit protein uL15">
    <location>
        <begin position="1"/>
        <end position="144"/>
    </location>
</feature>
<feature type="region of interest" description="Disordered" evidence="2">
    <location>
        <begin position="1"/>
        <end position="53"/>
    </location>
</feature>
<feature type="compositionally biased region" description="Gly residues" evidence="2">
    <location>
        <begin position="21"/>
        <end position="31"/>
    </location>
</feature>
<dbReference type="EMBL" id="CU468135">
    <property type="protein sequence ID" value="CAO98190.1"/>
    <property type="molecule type" value="Genomic_DNA"/>
</dbReference>
<dbReference type="RefSeq" id="WP_012442835.1">
    <property type="nucleotide sequence ID" value="NC_010694.1"/>
</dbReference>
<dbReference type="SMR" id="B2VK77"/>
<dbReference type="STRING" id="465817.ETA_31440"/>
<dbReference type="KEGG" id="eta:ETA_31440"/>
<dbReference type="eggNOG" id="COG0200">
    <property type="taxonomic scope" value="Bacteria"/>
</dbReference>
<dbReference type="HOGENOM" id="CLU_055188_4_2_6"/>
<dbReference type="OrthoDB" id="9810293at2"/>
<dbReference type="Proteomes" id="UP000001726">
    <property type="component" value="Chromosome"/>
</dbReference>
<dbReference type="GO" id="GO:0022625">
    <property type="term" value="C:cytosolic large ribosomal subunit"/>
    <property type="evidence" value="ECO:0007669"/>
    <property type="project" value="TreeGrafter"/>
</dbReference>
<dbReference type="GO" id="GO:0019843">
    <property type="term" value="F:rRNA binding"/>
    <property type="evidence" value="ECO:0007669"/>
    <property type="project" value="UniProtKB-UniRule"/>
</dbReference>
<dbReference type="GO" id="GO:0003735">
    <property type="term" value="F:structural constituent of ribosome"/>
    <property type="evidence" value="ECO:0007669"/>
    <property type="project" value="InterPro"/>
</dbReference>
<dbReference type="GO" id="GO:0006412">
    <property type="term" value="P:translation"/>
    <property type="evidence" value="ECO:0007669"/>
    <property type="project" value="UniProtKB-UniRule"/>
</dbReference>
<dbReference type="FunFam" id="3.100.10.10:FF:000003">
    <property type="entry name" value="50S ribosomal protein L15"/>
    <property type="match status" value="1"/>
</dbReference>
<dbReference type="Gene3D" id="3.100.10.10">
    <property type="match status" value="1"/>
</dbReference>
<dbReference type="HAMAP" id="MF_01341">
    <property type="entry name" value="Ribosomal_uL15"/>
    <property type="match status" value="1"/>
</dbReference>
<dbReference type="InterPro" id="IPR030878">
    <property type="entry name" value="Ribosomal_uL15"/>
</dbReference>
<dbReference type="InterPro" id="IPR021131">
    <property type="entry name" value="Ribosomal_uL15/eL18"/>
</dbReference>
<dbReference type="InterPro" id="IPR036227">
    <property type="entry name" value="Ribosomal_uL15/eL18_sf"/>
</dbReference>
<dbReference type="InterPro" id="IPR005749">
    <property type="entry name" value="Ribosomal_uL15_bac-type"/>
</dbReference>
<dbReference type="InterPro" id="IPR001196">
    <property type="entry name" value="Ribosomal_uL15_CS"/>
</dbReference>
<dbReference type="NCBIfam" id="TIGR01071">
    <property type="entry name" value="rplO_bact"/>
    <property type="match status" value="1"/>
</dbReference>
<dbReference type="PANTHER" id="PTHR12934">
    <property type="entry name" value="50S RIBOSOMAL PROTEIN L15"/>
    <property type="match status" value="1"/>
</dbReference>
<dbReference type="PANTHER" id="PTHR12934:SF11">
    <property type="entry name" value="LARGE RIBOSOMAL SUBUNIT PROTEIN UL15M"/>
    <property type="match status" value="1"/>
</dbReference>
<dbReference type="Pfam" id="PF00828">
    <property type="entry name" value="Ribosomal_L27A"/>
    <property type="match status" value="1"/>
</dbReference>
<dbReference type="SUPFAM" id="SSF52080">
    <property type="entry name" value="Ribosomal proteins L15p and L18e"/>
    <property type="match status" value="1"/>
</dbReference>
<dbReference type="PROSITE" id="PS00475">
    <property type="entry name" value="RIBOSOMAL_L15"/>
    <property type="match status" value="1"/>
</dbReference>
<gene>
    <name evidence="1" type="primary">rplO</name>
    <name type="ordered locus">ETA_31440</name>
</gene>